<evidence type="ECO:0000255" key="1">
    <source>
        <dbReference type="HAMAP-Rule" id="MF_01326"/>
    </source>
</evidence>
<evidence type="ECO:0000305" key="2"/>
<proteinExistence type="inferred from homology"/>
<reference key="1">
    <citation type="journal article" date="2003" name="Proc. Natl. Acad. Sci. U.S.A.">
        <title>The genome of Nanoarchaeum equitans: insights into early archaeal evolution and derived parasitism.</title>
        <authorList>
            <person name="Waters E."/>
            <person name="Hohn M.J."/>
            <person name="Ahel I."/>
            <person name="Graham D.E."/>
            <person name="Adams M.D."/>
            <person name="Barnstead M."/>
            <person name="Beeson K.Y."/>
            <person name="Bibbs L."/>
            <person name="Bolanos R."/>
            <person name="Keller M."/>
            <person name="Kretz K."/>
            <person name="Lin X."/>
            <person name="Mathur E."/>
            <person name="Ni J."/>
            <person name="Podar M."/>
            <person name="Richardson T."/>
            <person name="Sutton G.G."/>
            <person name="Simon M."/>
            <person name="Soell D."/>
            <person name="Stetter K.O."/>
            <person name="Short J.M."/>
            <person name="Noorderwier M."/>
        </authorList>
    </citation>
    <scope>NUCLEOTIDE SEQUENCE [LARGE SCALE GENOMIC DNA]</scope>
    <source>
        <strain>Kin4-M</strain>
    </source>
</reference>
<keyword id="KW-1185">Reference proteome</keyword>
<keyword id="KW-0687">Ribonucleoprotein</keyword>
<keyword id="KW-0689">Ribosomal protein</keyword>
<keyword id="KW-0694">RNA-binding</keyword>
<keyword id="KW-0699">rRNA-binding</keyword>
<accession>P60663</accession>
<sequence>MLKIRNYNPSDWSPSWVRSKQPRKQRKYIINAPLHRRRKMMRSPLSKELREKLGIRNVPIKVGDVVRVERGNFRGKEGQVIDIDPKYYRVYLSLDTDRQYPFHPSKLTIIKLDLSDKKRREALKIDDSKYEELKKEGLAI</sequence>
<organism>
    <name type="scientific">Nanoarchaeum equitans (strain Kin4-M)</name>
    <dbReference type="NCBI Taxonomy" id="228908"/>
    <lineage>
        <taxon>Archaea</taxon>
        <taxon>Nanobdellota</taxon>
        <taxon>Candidatus Nanoarchaeia</taxon>
        <taxon>Nanoarchaeales</taxon>
        <taxon>Nanoarchaeaceae</taxon>
        <taxon>Nanoarchaeum</taxon>
    </lineage>
</organism>
<gene>
    <name evidence="1" type="primary">rpl24</name>
    <name type="ordered locus">NEQ257</name>
</gene>
<name>RL24_NANEQ</name>
<protein>
    <recommendedName>
        <fullName evidence="1">Large ribosomal subunit protein uL24</fullName>
    </recommendedName>
    <alternativeName>
        <fullName evidence="2">50S ribosomal protein L24</fullName>
    </alternativeName>
</protein>
<feature type="chain" id="PRO_0000130775" description="Large ribosomal subunit protein uL24">
    <location>
        <begin position="1"/>
        <end position="140"/>
    </location>
</feature>
<comment type="function">
    <text evidence="1">One of two assembly initiator proteins, it binds directly to the 5'-end of the 23S rRNA, where it nucleates assembly of the 50S subunit.</text>
</comment>
<comment type="function">
    <text evidence="1">Located at the polypeptide exit tunnel on the outside of the subunit.</text>
</comment>
<comment type="subunit">
    <text evidence="1">Part of the 50S ribosomal subunit.</text>
</comment>
<comment type="similarity">
    <text evidence="1">Belongs to the universal ribosomal protein uL24 family.</text>
</comment>
<dbReference type="EMBL" id="AE017199">
    <property type="protein sequence ID" value="AAR39109.1"/>
    <property type="molecule type" value="Genomic_DNA"/>
</dbReference>
<dbReference type="SMR" id="P60663"/>
<dbReference type="STRING" id="228908.NEQ257"/>
<dbReference type="EnsemblBacteria" id="AAR39109">
    <property type="protein sequence ID" value="AAR39109"/>
    <property type="gene ID" value="NEQ257"/>
</dbReference>
<dbReference type="KEGG" id="neq:NEQ257"/>
<dbReference type="PATRIC" id="fig|228908.8.peg.261"/>
<dbReference type="HOGENOM" id="CLU_093240_2_1_2"/>
<dbReference type="Proteomes" id="UP000000578">
    <property type="component" value="Chromosome"/>
</dbReference>
<dbReference type="GO" id="GO:0015934">
    <property type="term" value="C:large ribosomal subunit"/>
    <property type="evidence" value="ECO:0007669"/>
    <property type="project" value="InterPro"/>
</dbReference>
<dbReference type="GO" id="GO:0019843">
    <property type="term" value="F:rRNA binding"/>
    <property type="evidence" value="ECO:0007669"/>
    <property type="project" value="UniProtKB-UniRule"/>
</dbReference>
<dbReference type="GO" id="GO:0003735">
    <property type="term" value="F:structural constituent of ribosome"/>
    <property type="evidence" value="ECO:0007669"/>
    <property type="project" value="InterPro"/>
</dbReference>
<dbReference type="GO" id="GO:0006412">
    <property type="term" value="P:translation"/>
    <property type="evidence" value="ECO:0007669"/>
    <property type="project" value="UniProtKB-UniRule"/>
</dbReference>
<dbReference type="CDD" id="cd06091">
    <property type="entry name" value="KOW_NusG"/>
    <property type="match status" value="1"/>
</dbReference>
<dbReference type="Gene3D" id="2.30.30.30">
    <property type="match status" value="1"/>
</dbReference>
<dbReference type="HAMAP" id="MF_01326_A">
    <property type="entry name" value="Ribosomal_uL24_A"/>
    <property type="match status" value="1"/>
</dbReference>
<dbReference type="InterPro" id="IPR005824">
    <property type="entry name" value="KOW"/>
</dbReference>
<dbReference type="InterPro" id="IPR014722">
    <property type="entry name" value="Rib_uL2_dom2"/>
</dbReference>
<dbReference type="InterPro" id="IPR005756">
    <property type="entry name" value="Ribosomal_uL24_euk/arc"/>
</dbReference>
<dbReference type="InterPro" id="IPR008991">
    <property type="entry name" value="Translation_prot_SH3-like_sf"/>
</dbReference>
<dbReference type="NCBIfam" id="TIGR01080">
    <property type="entry name" value="rplX_A_E"/>
    <property type="match status" value="1"/>
</dbReference>
<dbReference type="PANTHER" id="PTHR11143">
    <property type="entry name" value="60S RIBOSOMAL PROTEIN L26 FAMILY MEMBER"/>
    <property type="match status" value="1"/>
</dbReference>
<dbReference type="Pfam" id="PF00467">
    <property type="entry name" value="KOW"/>
    <property type="match status" value="1"/>
</dbReference>
<dbReference type="Pfam" id="PF16906">
    <property type="entry name" value="Ribosomal_L26"/>
    <property type="match status" value="1"/>
</dbReference>
<dbReference type="SMART" id="SM00739">
    <property type="entry name" value="KOW"/>
    <property type="match status" value="1"/>
</dbReference>
<dbReference type="SUPFAM" id="SSF50104">
    <property type="entry name" value="Translation proteins SH3-like domain"/>
    <property type="match status" value="1"/>
</dbReference>